<gene>
    <name type="ordered locus">YNL277W-A</name>
</gene>
<reference key="1">
    <citation type="journal article" date="1997" name="Nature">
        <title>The nucleotide sequence of Saccharomyces cerevisiae chromosome XIV and its evolutionary implications.</title>
        <authorList>
            <person name="Philippsen P."/>
            <person name="Kleine K."/>
            <person name="Poehlmann R."/>
            <person name="Duesterhoeft A."/>
            <person name="Hamberg K."/>
            <person name="Hegemann J.H."/>
            <person name="Obermaier B."/>
            <person name="Urrestarazu L.A."/>
            <person name="Aert R."/>
            <person name="Albermann K."/>
            <person name="Altmann R."/>
            <person name="Andre B."/>
            <person name="Baladron V."/>
            <person name="Ballesta J.P.G."/>
            <person name="Becam A.-M."/>
            <person name="Beinhauer J.D."/>
            <person name="Boskovic J."/>
            <person name="Buitrago M.J."/>
            <person name="Bussereau F."/>
            <person name="Coster F."/>
            <person name="Crouzet M."/>
            <person name="D'Angelo M."/>
            <person name="Dal Pero F."/>
            <person name="De Antoni A."/>
            <person name="del Rey F."/>
            <person name="Doignon F."/>
            <person name="Domdey H."/>
            <person name="Dubois E."/>
            <person name="Fiedler T.A."/>
            <person name="Fleig U."/>
            <person name="Floeth M."/>
            <person name="Fritz C."/>
            <person name="Gaillardin C."/>
            <person name="Garcia-Cantalejo J.M."/>
            <person name="Glansdorff N."/>
            <person name="Goffeau A."/>
            <person name="Gueldener U."/>
            <person name="Herbert C.J."/>
            <person name="Heumann K."/>
            <person name="Heuss-Neitzel D."/>
            <person name="Hilbert H."/>
            <person name="Hinni K."/>
            <person name="Iraqui Houssaini I."/>
            <person name="Jacquet M."/>
            <person name="Jimenez A."/>
            <person name="Jonniaux J.-L."/>
            <person name="Karpfinger-Hartl L."/>
            <person name="Lanfranchi G."/>
            <person name="Lepingle A."/>
            <person name="Levesque H."/>
            <person name="Lyck R."/>
            <person name="Maftahi M."/>
            <person name="Mallet L."/>
            <person name="Maurer C.T.C."/>
            <person name="Messenguy F."/>
            <person name="Mewes H.-W."/>
            <person name="Moestl D."/>
            <person name="Nasr F."/>
            <person name="Nicaud J.-M."/>
            <person name="Niedenthal R.K."/>
            <person name="Pandolfo D."/>
            <person name="Pierard A."/>
            <person name="Piravandi E."/>
            <person name="Planta R.J."/>
            <person name="Pohl T.M."/>
            <person name="Purnelle B."/>
            <person name="Rebischung C."/>
            <person name="Remacha M.A."/>
            <person name="Revuelta J.L."/>
            <person name="Rinke M."/>
            <person name="Saiz J.E."/>
            <person name="Sartorello F."/>
            <person name="Scherens B."/>
            <person name="Sen-Gupta M."/>
            <person name="Soler-Mira A."/>
            <person name="Urbanus J.H.M."/>
            <person name="Valle G."/>
            <person name="Van Dyck L."/>
            <person name="Verhasselt P."/>
            <person name="Vierendeels F."/>
            <person name="Vissers S."/>
            <person name="Voet M."/>
            <person name="Volckaert G."/>
            <person name="Wach A."/>
            <person name="Wambutt R."/>
            <person name="Wedler H."/>
            <person name="Zollner A."/>
            <person name="Hani J."/>
        </authorList>
    </citation>
    <scope>NUCLEOTIDE SEQUENCE [LARGE SCALE GENOMIC DNA]</scope>
    <source>
        <strain>ATCC 204508 / S288c</strain>
    </source>
</reference>
<reference key="2">
    <citation type="journal article" date="2014" name="G3 (Bethesda)">
        <title>The reference genome sequence of Saccharomyces cerevisiae: Then and now.</title>
        <authorList>
            <person name="Engel S.R."/>
            <person name="Dietrich F.S."/>
            <person name="Fisk D.G."/>
            <person name="Binkley G."/>
            <person name="Balakrishnan R."/>
            <person name="Costanzo M.C."/>
            <person name="Dwight S.S."/>
            <person name="Hitz B.C."/>
            <person name="Karra K."/>
            <person name="Nash R.S."/>
            <person name="Weng S."/>
            <person name="Wong E.D."/>
            <person name="Lloyd P."/>
            <person name="Skrzypek M.S."/>
            <person name="Miyasato S.R."/>
            <person name="Simison M."/>
            <person name="Cherry J.M."/>
        </authorList>
    </citation>
    <scope>GENOME REANNOTATION</scope>
    <source>
        <strain>ATCC 204508 / S288c</strain>
    </source>
</reference>
<reference key="3">
    <citation type="journal article" date="2002" name="Genome Res.">
        <title>Parallel identification of new genes in Saccharomyces cerevisiae.</title>
        <authorList>
            <person name="Oshiro G."/>
            <person name="Wodicka L.M."/>
            <person name="Washburn M.P."/>
            <person name="Yates J.R. III"/>
            <person name="Lockhart D.J."/>
            <person name="Winzeler E.A."/>
        </authorList>
    </citation>
    <scope>IDENTIFICATION BY MASS SPECTROMETRY</scope>
</reference>
<proteinExistence type="evidence at protein level"/>
<name>YN227_YEAST</name>
<accession>Q3E7Z0</accession>
<accession>D6W0R7</accession>
<feature type="chain" id="PRO_0000247797" description="Uncharacterized protein YNL277W-A">
    <location>
        <begin position="1"/>
        <end position="62"/>
    </location>
</feature>
<organism>
    <name type="scientific">Saccharomyces cerevisiae (strain ATCC 204508 / S288c)</name>
    <name type="common">Baker's yeast</name>
    <dbReference type="NCBI Taxonomy" id="559292"/>
    <lineage>
        <taxon>Eukaryota</taxon>
        <taxon>Fungi</taxon>
        <taxon>Dikarya</taxon>
        <taxon>Ascomycota</taxon>
        <taxon>Saccharomycotina</taxon>
        <taxon>Saccharomycetes</taxon>
        <taxon>Saccharomycetales</taxon>
        <taxon>Saccharomycetaceae</taxon>
        <taxon>Saccharomyces</taxon>
    </lineage>
</organism>
<keyword id="KW-1185">Reference proteome</keyword>
<sequence length="62" mass="7208">MTLAYYGQPVKMCHILPPLRSLPVLVGKKKLKKKKSQTTNNHVIFLFTLFIKLLKTHNRMSL</sequence>
<protein>
    <recommendedName>
        <fullName>Uncharacterized protein YNL277W-A</fullName>
    </recommendedName>
</protein>
<dbReference type="EMBL" id="Z71553">
    <property type="status" value="NOT_ANNOTATED_CDS"/>
    <property type="molecule type" value="Genomic_DNA"/>
</dbReference>
<dbReference type="EMBL" id="BK006947">
    <property type="protein sequence ID" value="DAA10283.1"/>
    <property type="molecule type" value="Genomic_DNA"/>
</dbReference>
<dbReference type="RefSeq" id="NP_878151.1">
    <property type="nucleotide sequence ID" value="NM_001184664.1"/>
</dbReference>
<dbReference type="BioGRID" id="37051">
    <property type="interactions" value="23"/>
</dbReference>
<dbReference type="FunCoup" id="Q3E7Z0">
    <property type="interactions" value="18"/>
</dbReference>
<dbReference type="MINT" id="Q3E7Z0"/>
<dbReference type="STRING" id="4932.YNL277W-A"/>
<dbReference type="PaxDb" id="4932-YNL277W-A"/>
<dbReference type="EnsemblFungi" id="YNL277W-A_mRNA">
    <property type="protein sequence ID" value="YNL277W-A"/>
    <property type="gene ID" value="YNL277W-A"/>
</dbReference>
<dbReference type="GeneID" id="1466509"/>
<dbReference type="KEGG" id="sce:YNL277W-A"/>
<dbReference type="AGR" id="SGD:S000028852"/>
<dbReference type="SGD" id="S000028852">
    <property type="gene designation" value="YNL277W-A"/>
</dbReference>
<dbReference type="VEuPathDB" id="FungiDB:YNL277W-A"/>
<dbReference type="HOGENOM" id="CLU_2905444_0_0_1"/>
<dbReference type="InParanoid" id="Q3E7Z0"/>
<dbReference type="BioCyc" id="YEAST:G3O-33416-MONOMER"/>
<dbReference type="BioGRID-ORCS" id="1466509">
    <property type="hits" value="0 hits in 10 CRISPR screens"/>
</dbReference>
<dbReference type="PRO" id="PR:Q3E7Z0"/>
<dbReference type="Proteomes" id="UP000002311">
    <property type="component" value="Chromosome XIV"/>
</dbReference>
<dbReference type="RNAct" id="Q3E7Z0">
    <property type="molecule type" value="protein"/>
</dbReference>